<comment type="function">
    <text>Unknown; dispensable for production of the lantibiotic sublancin 168 and for competence for DNA uptake.</text>
</comment>
<comment type="subcellular location">
    <subcellularLocation>
        <location evidence="3">Secreted</location>
    </subcellularLocation>
</comment>
<comment type="similarity">
    <text evidence="3">Belongs to the thioredoxin family.</text>
</comment>
<gene>
    <name type="primary">bdbA</name>
    <name type="synonym">yolI</name>
    <name type="ordered locus">BSU21460</name>
</gene>
<sequence>MKKWIVLFLVLIAAAISIFVYVSTGSEKPFYNDINLTQYQKEVDSKKPKFIYVYETSCPPCQEIKPELNEVIKKEKLKVQALNIEEKENYNTEFLDKYNLNKTPTILYYKDGKEKDRLEGYRSASQIEKFFDKNGDR</sequence>
<name>BDBA_BACSU</name>
<proteinExistence type="inferred from homology"/>
<accession>P68569</accession>
<accession>O31987</accession>
<accession>O64035</accession>
<evidence type="ECO:0000255" key="1"/>
<evidence type="ECO:0000255" key="2">
    <source>
        <dbReference type="PROSITE-ProRule" id="PRU00691"/>
    </source>
</evidence>
<evidence type="ECO:0000305" key="3"/>
<reference key="1">
    <citation type="journal article" date="1997" name="Nature">
        <title>The complete genome sequence of the Gram-positive bacterium Bacillus subtilis.</title>
        <authorList>
            <person name="Kunst F."/>
            <person name="Ogasawara N."/>
            <person name="Moszer I."/>
            <person name="Albertini A.M."/>
            <person name="Alloni G."/>
            <person name="Azevedo V."/>
            <person name="Bertero M.G."/>
            <person name="Bessieres P."/>
            <person name="Bolotin A."/>
            <person name="Borchert S."/>
            <person name="Borriss R."/>
            <person name="Boursier L."/>
            <person name="Brans A."/>
            <person name="Braun M."/>
            <person name="Brignell S.C."/>
            <person name="Bron S."/>
            <person name="Brouillet S."/>
            <person name="Bruschi C.V."/>
            <person name="Caldwell B."/>
            <person name="Capuano V."/>
            <person name="Carter N.M."/>
            <person name="Choi S.-K."/>
            <person name="Codani J.-J."/>
            <person name="Connerton I.F."/>
            <person name="Cummings N.J."/>
            <person name="Daniel R.A."/>
            <person name="Denizot F."/>
            <person name="Devine K.M."/>
            <person name="Duesterhoeft A."/>
            <person name="Ehrlich S.D."/>
            <person name="Emmerson P.T."/>
            <person name="Entian K.-D."/>
            <person name="Errington J."/>
            <person name="Fabret C."/>
            <person name="Ferrari E."/>
            <person name="Foulger D."/>
            <person name="Fritz C."/>
            <person name="Fujita M."/>
            <person name="Fujita Y."/>
            <person name="Fuma S."/>
            <person name="Galizzi A."/>
            <person name="Galleron N."/>
            <person name="Ghim S.-Y."/>
            <person name="Glaser P."/>
            <person name="Goffeau A."/>
            <person name="Golightly E.J."/>
            <person name="Grandi G."/>
            <person name="Guiseppi G."/>
            <person name="Guy B.J."/>
            <person name="Haga K."/>
            <person name="Haiech J."/>
            <person name="Harwood C.R."/>
            <person name="Henaut A."/>
            <person name="Hilbert H."/>
            <person name="Holsappel S."/>
            <person name="Hosono S."/>
            <person name="Hullo M.-F."/>
            <person name="Itaya M."/>
            <person name="Jones L.-M."/>
            <person name="Joris B."/>
            <person name="Karamata D."/>
            <person name="Kasahara Y."/>
            <person name="Klaerr-Blanchard M."/>
            <person name="Klein C."/>
            <person name="Kobayashi Y."/>
            <person name="Koetter P."/>
            <person name="Koningstein G."/>
            <person name="Krogh S."/>
            <person name="Kumano M."/>
            <person name="Kurita K."/>
            <person name="Lapidus A."/>
            <person name="Lardinois S."/>
            <person name="Lauber J."/>
            <person name="Lazarevic V."/>
            <person name="Lee S.-M."/>
            <person name="Levine A."/>
            <person name="Liu H."/>
            <person name="Masuda S."/>
            <person name="Mauel C."/>
            <person name="Medigue C."/>
            <person name="Medina N."/>
            <person name="Mellado R.P."/>
            <person name="Mizuno M."/>
            <person name="Moestl D."/>
            <person name="Nakai S."/>
            <person name="Noback M."/>
            <person name="Noone D."/>
            <person name="O'Reilly M."/>
            <person name="Ogawa K."/>
            <person name="Ogiwara A."/>
            <person name="Oudega B."/>
            <person name="Park S.-H."/>
            <person name="Parro V."/>
            <person name="Pohl T.M."/>
            <person name="Portetelle D."/>
            <person name="Porwollik S."/>
            <person name="Prescott A.M."/>
            <person name="Presecan E."/>
            <person name="Pujic P."/>
            <person name="Purnelle B."/>
            <person name="Rapoport G."/>
            <person name="Rey M."/>
            <person name="Reynolds S."/>
            <person name="Rieger M."/>
            <person name="Rivolta C."/>
            <person name="Rocha E."/>
            <person name="Roche B."/>
            <person name="Rose M."/>
            <person name="Sadaie Y."/>
            <person name="Sato T."/>
            <person name="Scanlan E."/>
            <person name="Schleich S."/>
            <person name="Schroeter R."/>
            <person name="Scoffone F."/>
            <person name="Sekiguchi J."/>
            <person name="Sekowska A."/>
            <person name="Seror S.J."/>
            <person name="Serror P."/>
            <person name="Shin B.-S."/>
            <person name="Soldo B."/>
            <person name="Sorokin A."/>
            <person name="Tacconi E."/>
            <person name="Takagi T."/>
            <person name="Takahashi H."/>
            <person name="Takemaru K."/>
            <person name="Takeuchi M."/>
            <person name="Tamakoshi A."/>
            <person name="Tanaka T."/>
            <person name="Terpstra P."/>
            <person name="Tognoni A."/>
            <person name="Tosato V."/>
            <person name="Uchiyama S."/>
            <person name="Vandenbol M."/>
            <person name="Vannier F."/>
            <person name="Vassarotti A."/>
            <person name="Viari A."/>
            <person name="Wambutt R."/>
            <person name="Wedler E."/>
            <person name="Wedler H."/>
            <person name="Weitzenegger T."/>
            <person name="Winters P."/>
            <person name="Wipat A."/>
            <person name="Yamamoto H."/>
            <person name="Yamane K."/>
            <person name="Yasumoto K."/>
            <person name="Yata K."/>
            <person name="Yoshida K."/>
            <person name="Yoshikawa H.-F."/>
            <person name="Zumstein E."/>
            <person name="Yoshikawa H."/>
            <person name="Danchin A."/>
        </authorList>
    </citation>
    <scope>NUCLEOTIDE SEQUENCE [LARGE SCALE GENOMIC DNA]</scope>
    <source>
        <strain>168</strain>
    </source>
</reference>
<reference key="2">
    <citation type="journal article" date="1999" name="J. Biol. Chem.">
        <title>Functional analysis of paralogous thiol-disulfide oxidoreductases in Bacillus subtilis.</title>
        <authorList>
            <person name="Bolhuis A."/>
            <person name="Venema G."/>
            <person name="Quax W.J."/>
            <person name="Bron S."/>
            <person name="van Dijl J.M."/>
        </authorList>
    </citation>
    <scope>IDENTIFICATION</scope>
    <source>
        <strain>168</strain>
    </source>
</reference>
<reference key="3">
    <citation type="journal article" date="2002" name="J. Biol. Chem.">
        <title>Thiol-disulfide oxidoreductases are essential for the production of the lantibiotic sublancin 168.</title>
        <authorList>
            <person name="Dorenbos R."/>
            <person name="Stein T."/>
            <person name="Kabel J."/>
            <person name="Bruand C."/>
            <person name="Bolhuis A."/>
            <person name="Bron S."/>
            <person name="Quax W.J."/>
            <person name="Van Dijl J.M."/>
        </authorList>
    </citation>
    <scope>HAS NO ROLE IN PRODUCTION OF SUBLANCIN 168</scope>
    <source>
        <strain>168</strain>
    </source>
</reference>
<protein>
    <recommendedName>
        <fullName>SPbeta prophage-derived disulfide bond formation protein A</fullName>
    </recommendedName>
    <alternativeName>
        <fullName>Disulfide oxidoreductase A</fullName>
    </alternativeName>
    <alternativeName>
        <fullName>Thiol-disulfide oxidoreductase A</fullName>
    </alternativeName>
</protein>
<dbReference type="EMBL" id="AL009126">
    <property type="protein sequence ID" value="CAB14064.1"/>
    <property type="molecule type" value="Genomic_DNA"/>
</dbReference>
<dbReference type="RefSeq" id="NP_390029.1">
    <property type="nucleotide sequence ID" value="NC_000964.3"/>
</dbReference>
<dbReference type="RefSeq" id="WP_003230920.1">
    <property type="nucleotide sequence ID" value="NZ_OZ025638.1"/>
</dbReference>
<dbReference type="SMR" id="P68569"/>
<dbReference type="FunCoup" id="P68569">
    <property type="interactions" value="11"/>
</dbReference>
<dbReference type="STRING" id="224308.BSU21460"/>
<dbReference type="PaxDb" id="224308-BSU21460"/>
<dbReference type="EnsemblBacteria" id="CAB14064">
    <property type="protein sequence ID" value="CAB14064"/>
    <property type="gene ID" value="BSU_21460"/>
</dbReference>
<dbReference type="GeneID" id="939129"/>
<dbReference type="KEGG" id="bsu:BSU21460"/>
<dbReference type="PATRIC" id="fig|224308.179.peg.2343"/>
<dbReference type="eggNOG" id="COG0526">
    <property type="taxonomic scope" value="Bacteria"/>
</dbReference>
<dbReference type="InParanoid" id="P68569"/>
<dbReference type="OrthoDB" id="32134at2"/>
<dbReference type="PhylomeDB" id="P68569"/>
<dbReference type="BioCyc" id="BSUB:BSU21460-MONOMER"/>
<dbReference type="Proteomes" id="UP000001570">
    <property type="component" value="Chromosome"/>
</dbReference>
<dbReference type="GO" id="GO:0005737">
    <property type="term" value="C:cytoplasm"/>
    <property type="evidence" value="ECO:0000318"/>
    <property type="project" value="GO_Central"/>
</dbReference>
<dbReference type="GO" id="GO:0005829">
    <property type="term" value="C:cytosol"/>
    <property type="evidence" value="ECO:0000318"/>
    <property type="project" value="GO_Central"/>
</dbReference>
<dbReference type="GO" id="GO:0005576">
    <property type="term" value="C:extracellular region"/>
    <property type="evidence" value="ECO:0007669"/>
    <property type="project" value="UniProtKB-SubCell"/>
</dbReference>
<dbReference type="GO" id="GO:0015035">
    <property type="term" value="F:protein-disulfide reductase activity"/>
    <property type="evidence" value="ECO:0000318"/>
    <property type="project" value="GO_Central"/>
</dbReference>
<dbReference type="GO" id="GO:0045454">
    <property type="term" value="P:cell redox homeostasis"/>
    <property type="evidence" value="ECO:0000318"/>
    <property type="project" value="GO_Central"/>
</dbReference>
<dbReference type="CDD" id="cd02947">
    <property type="entry name" value="TRX_family"/>
    <property type="match status" value="1"/>
</dbReference>
<dbReference type="Gene3D" id="3.40.30.10">
    <property type="entry name" value="Glutaredoxin"/>
    <property type="match status" value="1"/>
</dbReference>
<dbReference type="InterPro" id="IPR036249">
    <property type="entry name" value="Thioredoxin-like_sf"/>
</dbReference>
<dbReference type="InterPro" id="IPR013766">
    <property type="entry name" value="Thioredoxin_domain"/>
</dbReference>
<dbReference type="PANTHER" id="PTHR45663">
    <property type="entry name" value="GEO12009P1"/>
    <property type="match status" value="1"/>
</dbReference>
<dbReference type="PANTHER" id="PTHR45663:SF11">
    <property type="entry name" value="GEO12009P1"/>
    <property type="match status" value="1"/>
</dbReference>
<dbReference type="Pfam" id="PF00085">
    <property type="entry name" value="Thioredoxin"/>
    <property type="match status" value="1"/>
</dbReference>
<dbReference type="SUPFAM" id="SSF52833">
    <property type="entry name" value="Thioredoxin-like"/>
    <property type="match status" value="1"/>
</dbReference>
<dbReference type="PROSITE" id="PS51352">
    <property type="entry name" value="THIOREDOXIN_2"/>
    <property type="match status" value="1"/>
</dbReference>
<feature type="signal peptide" evidence="1">
    <location>
        <begin position="1"/>
        <end position="25"/>
    </location>
</feature>
<feature type="chain" id="PRO_0000034282" description="SPbeta prophage-derived disulfide bond formation protein A">
    <location>
        <begin position="26"/>
        <end position="137"/>
    </location>
</feature>
<feature type="domain" description="Thioredoxin" evidence="2">
    <location>
        <begin position="26"/>
        <end position="136"/>
    </location>
</feature>
<feature type="disulfide bond" description="Redox-active" evidence="2">
    <location>
        <begin position="58"/>
        <end position="61"/>
    </location>
</feature>
<keyword id="KW-1015">Disulfide bond</keyword>
<keyword id="KW-0560">Oxidoreductase</keyword>
<keyword id="KW-0676">Redox-active center</keyword>
<keyword id="KW-1185">Reference proteome</keyword>
<keyword id="KW-0964">Secreted</keyword>
<keyword id="KW-0732">Signal</keyword>
<organism>
    <name type="scientific">Bacillus subtilis (strain 168)</name>
    <dbReference type="NCBI Taxonomy" id="224308"/>
    <lineage>
        <taxon>Bacteria</taxon>
        <taxon>Bacillati</taxon>
        <taxon>Bacillota</taxon>
        <taxon>Bacilli</taxon>
        <taxon>Bacillales</taxon>
        <taxon>Bacillaceae</taxon>
        <taxon>Bacillus</taxon>
    </lineage>
</organism>